<accession>B5FHG4</accession>
<protein>
    <recommendedName>
        <fullName evidence="1">Carnitinyl-CoA dehydratase</fullName>
        <ecNumber evidence="1">4.2.1.149</ecNumber>
    </recommendedName>
    <alternativeName>
        <fullName evidence="1">Crotonobetainyl-CoA hydratase</fullName>
    </alternativeName>
</protein>
<reference key="1">
    <citation type="journal article" date="2011" name="J. Bacteriol.">
        <title>Comparative genomics of 28 Salmonella enterica isolates: evidence for CRISPR-mediated adaptive sublineage evolution.</title>
        <authorList>
            <person name="Fricke W.F."/>
            <person name="Mammel M.K."/>
            <person name="McDermott P.F."/>
            <person name="Tartera C."/>
            <person name="White D.G."/>
            <person name="Leclerc J.E."/>
            <person name="Ravel J."/>
            <person name="Cebula T.A."/>
        </authorList>
    </citation>
    <scope>NUCLEOTIDE SEQUENCE [LARGE SCALE GENOMIC DNA]</scope>
    <source>
        <strain>CT_02021853</strain>
    </source>
</reference>
<proteinExistence type="inferred from homology"/>
<name>CAID_SALDC</name>
<organism>
    <name type="scientific">Salmonella dublin (strain CT_02021853)</name>
    <dbReference type="NCBI Taxonomy" id="439851"/>
    <lineage>
        <taxon>Bacteria</taxon>
        <taxon>Pseudomonadati</taxon>
        <taxon>Pseudomonadota</taxon>
        <taxon>Gammaproteobacteria</taxon>
        <taxon>Enterobacterales</taxon>
        <taxon>Enterobacteriaceae</taxon>
        <taxon>Salmonella</taxon>
    </lineage>
</organism>
<dbReference type="EC" id="4.2.1.149" evidence="1"/>
<dbReference type="EMBL" id="CP001144">
    <property type="protein sequence ID" value="ACH75921.1"/>
    <property type="molecule type" value="Genomic_DNA"/>
</dbReference>
<dbReference type="RefSeq" id="WP_000004383.1">
    <property type="nucleotide sequence ID" value="NC_011205.1"/>
</dbReference>
<dbReference type="SMR" id="B5FHG4"/>
<dbReference type="KEGG" id="sed:SeD_A0076"/>
<dbReference type="HOGENOM" id="CLU_009834_7_6_6"/>
<dbReference type="UniPathway" id="UPA00117"/>
<dbReference type="Proteomes" id="UP000008322">
    <property type="component" value="Chromosome"/>
</dbReference>
<dbReference type="GO" id="GO:0016836">
    <property type="term" value="F:hydro-lyase activity"/>
    <property type="evidence" value="ECO:0007669"/>
    <property type="project" value="UniProtKB-UniRule"/>
</dbReference>
<dbReference type="GO" id="GO:0008735">
    <property type="term" value="F:L-carnitine CoA-transferase activity"/>
    <property type="evidence" value="ECO:0007669"/>
    <property type="project" value="RHEA"/>
</dbReference>
<dbReference type="GO" id="GO:0009437">
    <property type="term" value="P:carnitine metabolic process"/>
    <property type="evidence" value="ECO:0007669"/>
    <property type="project" value="UniProtKB-UniRule"/>
</dbReference>
<dbReference type="GO" id="GO:0006635">
    <property type="term" value="P:fatty acid beta-oxidation"/>
    <property type="evidence" value="ECO:0007669"/>
    <property type="project" value="TreeGrafter"/>
</dbReference>
<dbReference type="CDD" id="cd06558">
    <property type="entry name" value="crotonase-like"/>
    <property type="match status" value="1"/>
</dbReference>
<dbReference type="FunFam" id="1.10.12.10:FF:000005">
    <property type="entry name" value="Carnitinyl-CoA dehydratase"/>
    <property type="match status" value="1"/>
</dbReference>
<dbReference type="FunFam" id="3.90.226.10:FF:000009">
    <property type="entry name" value="Carnitinyl-CoA dehydratase"/>
    <property type="match status" value="1"/>
</dbReference>
<dbReference type="Gene3D" id="3.90.226.10">
    <property type="entry name" value="2-enoyl-CoA Hydratase, Chain A, domain 1"/>
    <property type="match status" value="1"/>
</dbReference>
<dbReference type="Gene3D" id="1.10.12.10">
    <property type="entry name" value="Lyase 2-enoyl-coa Hydratase, Chain A, domain 2"/>
    <property type="match status" value="1"/>
</dbReference>
<dbReference type="HAMAP" id="MF_01051">
    <property type="entry name" value="CaiD"/>
    <property type="match status" value="1"/>
</dbReference>
<dbReference type="InterPro" id="IPR022852">
    <property type="entry name" value="Carnitinyl_CoA_dehydratase"/>
</dbReference>
<dbReference type="InterPro" id="IPR029045">
    <property type="entry name" value="ClpP/crotonase-like_dom_sf"/>
</dbReference>
<dbReference type="InterPro" id="IPR018376">
    <property type="entry name" value="Enoyl-CoA_hyd/isom_CS"/>
</dbReference>
<dbReference type="InterPro" id="IPR001753">
    <property type="entry name" value="Enoyl-CoA_hydra/iso"/>
</dbReference>
<dbReference type="InterPro" id="IPR014748">
    <property type="entry name" value="Enoyl-CoA_hydra_C"/>
</dbReference>
<dbReference type="NCBIfam" id="NF002936">
    <property type="entry name" value="PRK03580.1"/>
    <property type="match status" value="1"/>
</dbReference>
<dbReference type="PANTHER" id="PTHR11941:SF54">
    <property type="entry name" value="ENOYL-COA HYDRATASE, MITOCHONDRIAL"/>
    <property type="match status" value="1"/>
</dbReference>
<dbReference type="PANTHER" id="PTHR11941">
    <property type="entry name" value="ENOYL-COA HYDRATASE-RELATED"/>
    <property type="match status" value="1"/>
</dbReference>
<dbReference type="Pfam" id="PF00378">
    <property type="entry name" value="ECH_1"/>
    <property type="match status" value="1"/>
</dbReference>
<dbReference type="SUPFAM" id="SSF52096">
    <property type="entry name" value="ClpP/crotonase"/>
    <property type="match status" value="1"/>
</dbReference>
<dbReference type="PROSITE" id="PS00166">
    <property type="entry name" value="ENOYL_COA_HYDRATASE"/>
    <property type="match status" value="1"/>
</dbReference>
<keyword id="KW-0456">Lyase</keyword>
<evidence type="ECO:0000255" key="1">
    <source>
        <dbReference type="HAMAP-Rule" id="MF_01051"/>
    </source>
</evidence>
<sequence>MSESLHLTRNGPILEITLDRPKANAIDAKTSFAMGEAFLNFRDDPELRVAIITGGGEKFFSAGWDLKAAAEGEAPDADFGPGGFAGLTEIFDLDKPVIAAVNGYAFGGGFELALAADFIVCAENASFALPEAKLGIVPDSGGVLRLPKLLPPAIVNEMVMTGRRMSAEEALRWGVVNRVVSQSELMDSARELAQQLVNSAPLAIAALKEIYRATSEMPVEEGYRYIRSGVLKHYPSVLHSEDALEGPQAFAEKRDPVWKGR</sequence>
<gene>
    <name evidence="1" type="primary">caiD</name>
    <name type="ordered locus">SeD_A0076</name>
</gene>
<feature type="chain" id="PRO_1000136261" description="Carnitinyl-CoA dehydratase">
    <location>
        <begin position="1"/>
        <end position="261"/>
    </location>
</feature>
<feature type="active site" description="Nucleophile" evidence="1">
    <location>
        <position position="111"/>
    </location>
</feature>
<feature type="active site" description="Proton acceptor" evidence="1">
    <location>
        <position position="131"/>
    </location>
</feature>
<comment type="function">
    <text evidence="1">Catalyzes the reversible dehydration of L-carnitinyl-CoA to crotonobetainyl-CoA.</text>
</comment>
<comment type="catalytic activity">
    <reaction evidence="1">
        <text>(R)-carnitinyl-CoA = crotonobetainyl-CoA + H2O</text>
        <dbReference type="Rhea" id="RHEA:28338"/>
        <dbReference type="ChEBI" id="CHEBI:15377"/>
        <dbReference type="ChEBI" id="CHEBI:60932"/>
        <dbReference type="ChEBI" id="CHEBI:60933"/>
        <dbReference type="EC" id="4.2.1.149"/>
    </reaction>
</comment>
<comment type="pathway">
    <text evidence="1">Amine and polyamine metabolism; carnitine metabolism.</text>
</comment>
<comment type="similarity">
    <text evidence="1">Belongs to the enoyl-CoA hydratase/isomerase family.</text>
</comment>